<name>NCAP_I86A3</name>
<accession>P67915</accession>
<accession>P15674</accession>
<comment type="function">
    <text evidence="1">Encapsidates the negative strand viral RNA, protecting it from nucleases. The encapsidated genomic RNA is termed the ribonucleoprotein (RNP) and serves as template for transcription and replication. The RNP needs to be localized in the host nucleus to start an infectious cycle, but is too large to diffuse through the nuclear pore complex. NP comprises at least 2 nuclear localization signals that are responsible for the active RNP import into the nucleus through cellular importin alpha/beta pathway. Later in the infection, nclear export of RNPs are mediated through viral proteins NEP interacting with M1 which binds nucleoproteins. It is possible that nucleoprotein binds directly host exportin-1/XPO1 and plays an active role in RNPs nuclear export. M1 interaction with RNP seems to hide nucleoprotein's nuclear localization signals. Soon after a virion infects a new cell, M1 dissociates from the RNP under acidification of the virion driven by M2 protein. Dissociation of M1 from RNP unmasks nucleoprotein's nuclear localization signals, targeting the RNP to the nucleus.</text>
</comment>
<comment type="subunit">
    <text evidence="1">Homomultimerizes to form the nucleocapsid. May bind host exportin-1/XPO1. Binds to viral genomic RNA. Protein-RNA contacts are mediated by a combination of electrostatic interactions between positively charged residues and the phosphate backbone and planar interactions between aromatic side chains and bases.</text>
</comment>
<comment type="subcellular location">
    <subcellularLocation>
        <location evidence="1">Virion</location>
    </subcellularLocation>
    <subcellularLocation>
        <location evidence="1">Host nucleus</location>
    </subcellularLocation>
</comment>
<comment type="PTM">
    <text evidence="1">Late in virus-infected cells, may be cleaved from a 56-kDa protein to a 53-kDa protein by a cellular caspase. This cleavage might be a marker for the onset of apoptosis in infected cells or have a specific function in virus host interaction.</text>
</comment>
<comment type="similarity">
    <text evidence="1">Belongs to the influenza viruses nucleoprotein family.</text>
</comment>
<gene>
    <name evidence="1" type="primary">NP</name>
</gene>
<dbReference type="EMBL" id="M30758">
    <property type="protein sequence ID" value="AAA43479.1"/>
    <property type="molecule type" value="Genomic_RNA"/>
</dbReference>
<dbReference type="SMR" id="P67915"/>
<dbReference type="GO" id="GO:0019029">
    <property type="term" value="C:helical viral capsid"/>
    <property type="evidence" value="ECO:0007669"/>
    <property type="project" value="UniProtKB-UniRule"/>
</dbReference>
<dbReference type="GO" id="GO:0043657">
    <property type="term" value="C:host cell"/>
    <property type="evidence" value="ECO:0007669"/>
    <property type="project" value="GOC"/>
</dbReference>
<dbReference type="GO" id="GO:0042025">
    <property type="term" value="C:host cell nucleus"/>
    <property type="evidence" value="ECO:0007669"/>
    <property type="project" value="UniProtKB-SubCell"/>
</dbReference>
<dbReference type="GO" id="GO:1990904">
    <property type="term" value="C:ribonucleoprotein complex"/>
    <property type="evidence" value="ECO:0007669"/>
    <property type="project" value="UniProtKB-KW"/>
</dbReference>
<dbReference type="GO" id="GO:0019013">
    <property type="term" value="C:viral nucleocapsid"/>
    <property type="evidence" value="ECO:0007669"/>
    <property type="project" value="UniProtKB-UniRule"/>
</dbReference>
<dbReference type="GO" id="GO:0003723">
    <property type="term" value="F:RNA binding"/>
    <property type="evidence" value="ECO:0007669"/>
    <property type="project" value="UniProtKB-UniRule"/>
</dbReference>
<dbReference type="GO" id="GO:0005198">
    <property type="term" value="F:structural molecule activity"/>
    <property type="evidence" value="ECO:0007669"/>
    <property type="project" value="UniProtKB-UniRule"/>
</dbReference>
<dbReference type="GO" id="GO:0046718">
    <property type="term" value="P:symbiont entry into host cell"/>
    <property type="evidence" value="ECO:0007669"/>
    <property type="project" value="UniProtKB-KW"/>
</dbReference>
<dbReference type="GO" id="GO:0075732">
    <property type="term" value="P:viral penetration into host nucleus"/>
    <property type="evidence" value="ECO:0007669"/>
    <property type="project" value="UniProtKB-UniRule"/>
</dbReference>
<dbReference type="HAMAP" id="MF_04070">
    <property type="entry name" value="INFV_NCAP"/>
    <property type="match status" value="1"/>
</dbReference>
<dbReference type="InterPro" id="IPR002141">
    <property type="entry name" value="Flu_NP"/>
</dbReference>
<dbReference type="Pfam" id="PF00506">
    <property type="entry name" value="Flu_NP"/>
    <property type="match status" value="1"/>
</dbReference>
<dbReference type="SUPFAM" id="SSF161003">
    <property type="entry name" value="flu NP-like"/>
    <property type="match status" value="1"/>
</dbReference>
<feature type="chain" id="PRO_0000079068" description="Nucleoprotein">
    <location>
        <begin position="1"/>
        <end position="498"/>
    </location>
</feature>
<feature type="region of interest" description="Disordered" evidence="2">
    <location>
        <begin position="1"/>
        <end position="21"/>
    </location>
</feature>
<feature type="short sequence motif" description="Unconventional nuclear localization signal" evidence="1">
    <location>
        <begin position="1"/>
        <end position="18"/>
    </location>
</feature>
<feature type="short sequence motif" description="Bipartite nuclear localization signal" evidence="1">
    <location>
        <begin position="198"/>
        <end position="216"/>
    </location>
</feature>
<sequence length="498" mass="56203">MASQGTKRSYEQMETGGERQNATEIRASVGRMVGGIGRFYVQMCTELKLNDHEGRLIQNSITIERMVLSAFDERRNKYLEEHPSAGKDPKKTGGPIYRRKDGKWMRELILHDKEEIMRIWRQANNGEDATAGLTHMMIWHSNLNDTTYQRTRALVRAGMDPRMCSLMQGSTLPRRSGAAGAAVKGVGTMVMELIRMIKRGINDRNFWRGENGRRTRIAYERMCNILKGKFQTAAQRAMMDQVREGRNPGNAEIEDLIFLARSALILRGSVAHKSCLPACVYGLAVASGYDFEKEGYSLVGIDPFKLLQNSQIFSLIRPKENPAHKSQLVWMACHSAAFEDLRVLNFIRGTKVIPRGQLATRGVQIASNENMETIDSSTLELRSRYWAIRTRSGGNTSQQRASAGQISVQPTFSVQRNLPFERATIMAAFTGNTERRTSDMRTEIIRMMENARSEDVSFQGRGVFELSDEKATNPIVPSFDMSNEGSYFFGDNAEEFDS</sequence>
<reference key="1">
    <citation type="journal article" date="1990" name="J. Virol.">
        <title>Evolution of the nucleoprotein gene of influenza A virus.</title>
        <authorList>
            <person name="Gorman O.T."/>
            <person name="Bean W.J."/>
            <person name="Kawaoka Y."/>
            <person name="Webster R.G."/>
        </authorList>
    </citation>
    <scope>NUCLEOTIDE SEQUENCE [GENOMIC RNA]</scope>
</reference>
<organismHost>
    <name type="scientific">Aves</name>
    <dbReference type="NCBI Taxonomy" id="8782"/>
</organismHost>
<organismHost>
    <name type="scientific">Equus caballus</name>
    <name type="common">Horse</name>
    <dbReference type="NCBI Taxonomy" id="9796"/>
</organismHost>
<keyword id="KW-0167">Capsid protein</keyword>
<keyword id="KW-1139">Helical capsid protein</keyword>
<keyword id="KW-1048">Host nucleus</keyword>
<keyword id="KW-0945">Host-virus interaction</keyword>
<keyword id="KW-0687">Ribonucleoprotein</keyword>
<keyword id="KW-0694">RNA-binding</keyword>
<keyword id="KW-0543">Viral nucleoprotein</keyword>
<keyword id="KW-1163">Viral penetration into host nucleus</keyword>
<keyword id="KW-0946">Virion</keyword>
<keyword id="KW-1160">Virus entry into host cell</keyword>
<proteinExistence type="inferred from homology"/>
<evidence type="ECO:0000255" key="1">
    <source>
        <dbReference type="HAMAP-Rule" id="MF_04070"/>
    </source>
</evidence>
<evidence type="ECO:0000256" key="2">
    <source>
        <dbReference type="SAM" id="MobiDB-lite"/>
    </source>
</evidence>
<organism>
    <name type="scientific">Influenza A virus (strain A/Equine/Tennessee/5/1986 H3N8)</name>
    <dbReference type="NCBI Taxonomy" id="380339"/>
    <lineage>
        <taxon>Viruses</taxon>
        <taxon>Riboviria</taxon>
        <taxon>Orthornavirae</taxon>
        <taxon>Negarnaviricota</taxon>
        <taxon>Polyploviricotina</taxon>
        <taxon>Insthoviricetes</taxon>
        <taxon>Articulavirales</taxon>
        <taxon>Orthomyxoviridae</taxon>
        <taxon>Alphainfluenzavirus</taxon>
        <taxon>Alphainfluenzavirus influenzae</taxon>
        <taxon>Influenza A virus</taxon>
    </lineage>
</organism>
<protein>
    <recommendedName>
        <fullName evidence="1">Nucleoprotein</fullName>
    </recommendedName>
    <alternativeName>
        <fullName evidence="1">Nucleocapsid protein</fullName>
        <shortName evidence="1">Protein N</shortName>
    </alternativeName>
</protein>